<feature type="chain" id="PRO_1000070039" description="Tyrosine recombinase XerC">
    <location>
        <begin position="1"/>
        <end position="298"/>
    </location>
</feature>
<feature type="domain" description="Core-binding (CB)" evidence="3">
    <location>
        <begin position="2"/>
        <end position="88"/>
    </location>
</feature>
<feature type="domain" description="Tyr recombinase" evidence="2">
    <location>
        <begin position="109"/>
        <end position="288"/>
    </location>
</feature>
<feature type="active site" evidence="1">
    <location>
        <position position="148"/>
    </location>
</feature>
<feature type="active site" evidence="1">
    <location>
        <position position="172"/>
    </location>
</feature>
<feature type="active site" evidence="1">
    <location>
        <position position="240"/>
    </location>
</feature>
<feature type="active site" evidence="1">
    <location>
        <position position="243"/>
    </location>
</feature>
<feature type="active site" evidence="1">
    <location>
        <position position="266"/>
    </location>
</feature>
<feature type="active site" description="O-(3'-phospho-DNA)-tyrosine intermediate" evidence="1">
    <location>
        <position position="275"/>
    </location>
</feature>
<dbReference type="EMBL" id="CP000036">
    <property type="protein sequence ID" value="ABB68281.1"/>
    <property type="molecule type" value="Genomic_DNA"/>
</dbReference>
<dbReference type="RefSeq" id="WP_000130691.1">
    <property type="nucleotide sequence ID" value="NC_007613.1"/>
</dbReference>
<dbReference type="SMR" id="Q31UH7"/>
<dbReference type="GeneID" id="75059707"/>
<dbReference type="KEGG" id="sbo:SBO_3822"/>
<dbReference type="HOGENOM" id="CLU_027562_9_0_6"/>
<dbReference type="Proteomes" id="UP000007067">
    <property type="component" value="Chromosome"/>
</dbReference>
<dbReference type="GO" id="GO:0005737">
    <property type="term" value="C:cytoplasm"/>
    <property type="evidence" value="ECO:0007669"/>
    <property type="project" value="UniProtKB-SubCell"/>
</dbReference>
<dbReference type="GO" id="GO:0003677">
    <property type="term" value="F:DNA binding"/>
    <property type="evidence" value="ECO:0007669"/>
    <property type="project" value="UniProtKB-KW"/>
</dbReference>
<dbReference type="GO" id="GO:0009037">
    <property type="term" value="F:tyrosine-based site-specific recombinase activity"/>
    <property type="evidence" value="ECO:0007669"/>
    <property type="project" value="UniProtKB-UniRule"/>
</dbReference>
<dbReference type="GO" id="GO:0051301">
    <property type="term" value="P:cell division"/>
    <property type="evidence" value="ECO:0007669"/>
    <property type="project" value="UniProtKB-KW"/>
</dbReference>
<dbReference type="GO" id="GO:0007059">
    <property type="term" value="P:chromosome segregation"/>
    <property type="evidence" value="ECO:0007669"/>
    <property type="project" value="UniProtKB-UniRule"/>
</dbReference>
<dbReference type="GO" id="GO:0006313">
    <property type="term" value="P:DNA transposition"/>
    <property type="evidence" value="ECO:0007669"/>
    <property type="project" value="UniProtKB-UniRule"/>
</dbReference>
<dbReference type="CDD" id="cd00798">
    <property type="entry name" value="INT_XerDC_C"/>
    <property type="match status" value="1"/>
</dbReference>
<dbReference type="FunFam" id="1.10.443.10:FF:000002">
    <property type="entry name" value="Tyrosine recombinase XerC"/>
    <property type="match status" value="1"/>
</dbReference>
<dbReference type="Gene3D" id="1.10.150.130">
    <property type="match status" value="1"/>
</dbReference>
<dbReference type="Gene3D" id="1.10.443.10">
    <property type="entry name" value="Intergrase catalytic core"/>
    <property type="match status" value="1"/>
</dbReference>
<dbReference type="HAMAP" id="MF_01808">
    <property type="entry name" value="Recomb_XerC_XerD"/>
    <property type="match status" value="1"/>
</dbReference>
<dbReference type="InterPro" id="IPR044068">
    <property type="entry name" value="CB"/>
</dbReference>
<dbReference type="InterPro" id="IPR011010">
    <property type="entry name" value="DNA_brk_join_enz"/>
</dbReference>
<dbReference type="InterPro" id="IPR013762">
    <property type="entry name" value="Integrase-like_cat_sf"/>
</dbReference>
<dbReference type="InterPro" id="IPR002104">
    <property type="entry name" value="Integrase_catalytic"/>
</dbReference>
<dbReference type="InterPro" id="IPR010998">
    <property type="entry name" value="Integrase_recombinase_N"/>
</dbReference>
<dbReference type="InterPro" id="IPR004107">
    <property type="entry name" value="Integrase_SAM-like_N"/>
</dbReference>
<dbReference type="InterPro" id="IPR011931">
    <property type="entry name" value="Recomb_XerC"/>
</dbReference>
<dbReference type="InterPro" id="IPR023009">
    <property type="entry name" value="Tyrosine_recombinase_XerC/XerD"/>
</dbReference>
<dbReference type="InterPro" id="IPR050090">
    <property type="entry name" value="Tyrosine_recombinase_XerCD"/>
</dbReference>
<dbReference type="NCBIfam" id="NF001399">
    <property type="entry name" value="PRK00283.1"/>
    <property type="match status" value="1"/>
</dbReference>
<dbReference type="NCBIfam" id="TIGR02224">
    <property type="entry name" value="recomb_XerC"/>
    <property type="match status" value="1"/>
</dbReference>
<dbReference type="PANTHER" id="PTHR30349">
    <property type="entry name" value="PHAGE INTEGRASE-RELATED"/>
    <property type="match status" value="1"/>
</dbReference>
<dbReference type="PANTHER" id="PTHR30349:SF81">
    <property type="entry name" value="TYROSINE RECOMBINASE XERC"/>
    <property type="match status" value="1"/>
</dbReference>
<dbReference type="Pfam" id="PF02899">
    <property type="entry name" value="Phage_int_SAM_1"/>
    <property type="match status" value="1"/>
</dbReference>
<dbReference type="Pfam" id="PF00589">
    <property type="entry name" value="Phage_integrase"/>
    <property type="match status" value="1"/>
</dbReference>
<dbReference type="SUPFAM" id="SSF56349">
    <property type="entry name" value="DNA breaking-rejoining enzymes"/>
    <property type="match status" value="1"/>
</dbReference>
<dbReference type="SUPFAM" id="SSF47823">
    <property type="entry name" value="lambda integrase-like, N-terminal domain"/>
    <property type="match status" value="1"/>
</dbReference>
<dbReference type="PROSITE" id="PS51900">
    <property type="entry name" value="CB"/>
    <property type="match status" value="1"/>
</dbReference>
<dbReference type="PROSITE" id="PS51898">
    <property type="entry name" value="TYR_RECOMBINASE"/>
    <property type="match status" value="1"/>
</dbReference>
<name>XERC_SHIBS</name>
<accession>Q31UH7</accession>
<sequence length="298" mass="33868">MTDLHTDVERYLRYLSVERQLSPITLLNYQRQLEAIINFASENGLQSWQQCDVTMVRNFAVRSRRKGLGAASLALRLSALRSFFDWLVSQNELKANPAKGVSAPKAPRHLPKNIDVDDMNRLLDIDINDPLAVRDRAMLEVMYGAGLRLSELVGLDIKHLDLESGEVWVMGKGSKERRLPIGRNAVAWIEHWLDLRDLFGSEDDALFLSKLGKRISARNVQKRFAEWGIKQGLNNHVHPHKLRHSFATHMLESSGDLRGVQELLGHANLSTTQIYTHLDFQHLASVYDAAHPRAKRGK</sequence>
<proteinExistence type="inferred from homology"/>
<evidence type="ECO:0000255" key="1">
    <source>
        <dbReference type="HAMAP-Rule" id="MF_01808"/>
    </source>
</evidence>
<evidence type="ECO:0000255" key="2">
    <source>
        <dbReference type="PROSITE-ProRule" id="PRU01246"/>
    </source>
</evidence>
<evidence type="ECO:0000255" key="3">
    <source>
        <dbReference type="PROSITE-ProRule" id="PRU01248"/>
    </source>
</evidence>
<protein>
    <recommendedName>
        <fullName evidence="1">Tyrosine recombinase XerC</fullName>
    </recommendedName>
</protein>
<keyword id="KW-0131">Cell cycle</keyword>
<keyword id="KW-0132">Cell division</keyword>
<keyword id="KW-0159">Chromosome partition</keyword>
<keyword id="KW-0963">Cytoplasm</keyword>
<keyword id="KW-0229">DNA integration</keyword>
<keyword id="KW-0233">DNA recombination</keyword>
<keyword id="KW-0238">DNA-binding</keyword>
<reference key="1">
    <citation type="journal article" date="2005" name="Nucleic Acids Res.">
        <title>Genome dynamics and diversity of Shigella species, the etiologic agents of bacillary dysentery.</title>
        <authorList>
            <person name="Yang F."/>
            <person name="Yang J."/>
            <person name="Zhang X."/>
            <person name="Chen L."/>
            <person name="Jiang Y."/>
            <person name="Yan Y."/>
            <person name="Tang X."/>
            <person name="Wang J."/>
            <person name="Xiong Z."/>
            <person name="Dong J."/>
            <person name="Xue Y."/>
            <person name="Zhu Y."/>
            <person name="Xu X."/>
            <person name="Sun L."/>
            <person name="Chen S."/>
            <person name="Nie H."/>
            <person name="Peng J."/>
            <person name="Xu J."/>
            <person name="Wang Y."/>
            <person name="Yuan Z."/>
            <person name="Wen Y."/>
            <person name="Yao Z."/>
            <person name="Shen Y."/>
            <person name="Qiang B."/>
            <person name="Hou Y."/>
            <person name="Yu J."/>
            <person name="Jin Q."/>
        </authorList>
    </citation>
    <scope>NUCLEOTIDE SEQUENCE [LARGE SCALE GENOMIC DNA]</scope>
    <source>
        <strain>Sb227</strain>
    </source>
</reference>
<gene>
    <name evidence="1" type="primary">xerC</name>
    <name type="ordered locus">SBO_3822</name>
</gene>
<organism>
    <name type="scientific">Shigella boydii serotype 4 (strain Sb227)</name>
    <dbReference type="NCBI Taxonomy" id="300268"/>
    <lineage>
        <taxon>Bacteria</taxon>
        <taxon>Pseudomonadati</taxon>
        <taxon>Pseudomonadota</taxon>
        <taxon>Gammaproteobacteria</taxon>
        <taxon>Enterobacterales</taxon>
        <taxon>Enterobacteriaceae</taxon>
        <taxon>Shigella</taxon>
    </lineage>
</organism>
<comment type="function">
    <text evidence="1">Site-specific tyrosine recombinase, which acts by catalyzing the cutting and rejoining of the recombining DNA molecules. Binds cooperatively to specific DNA consensus sequences that are separated from XerD binding sites by a short central region, forming the heterotetrameric XerC-XerD complex that recombines DNA substrates. The complex is essential to convert dimers of the bacterial chromosome into monomers to permit their segregation at cell division. It also contributes to the segregational stability of plasmids. In the complex XerC specifically exchanges the top DNA strands.</text>
</comment>
<comment type="activity regulation">
    <text evidence="1">FtsK may regulate the catalytic switch between XerC and XerD in the heterotetrameric complex during the two steps of the recombination process.</text>
</comment>
<comment type="subunit">
    <text evidence="1">Forms a cyclic heterotetrameric complex composed of two molecules of XerC and two molecules of XerD, in which XerC interacts with XerD via its C-terminal region, XerD interacts with XerC via its C-terminal region and so on.</text>
</comment>
<comment type="subcellular location">
    <subcellularLocation>
        <location evidence="1">Cytoplasm</location>
    </subcellularLocation>
</comment>
<comment type="similarity">
    <text evidence="1">Belongs to the 'phage' integrase family. XerC subfamily.</text>
</comment>